<gene>
    <name evidence="2" type="primary">infB</name>
    <name type="ordered locus">LCABL_17860</name>
</gene>
<dbReference type="EMBL" id="FM177140">
    <property type="protein sequence ID" value="CAQ66866.1"/>
    <property type="molecule type" value="Genomic_DNA"/>
</dbReference>
<dbReference type="SMR" id="B3WER5"/>
<dbReference type="KEGG" id="lcb:LCABL_17860"/>
<dbReference type="HOGENOM" id="CLU_006301_5_0_9"/>
<dbReference type="GO" id="GO:0005829">
    <property type="term" value="C:cytosol"/>
    <property type="evidence" value="ECO:0007669"/>
    <property type="project" value="TreeGrafter"/>
</dbReference>
<dbReference type="GO" id="GO:0005525">
    <property type="term" value="F:GTP binding"/>
    <property type="evidence" value="ECO:0007669"/>
    <property type="project" value="UniProtKB-KW"/>
</dbReference>
<dbReference type="GO" id="GO:0003924">
    <property type="term" value="F:GTPase activity"/>
    <property type="evidence" value="ECO:0007669"/>
    <property type="project" value="UniProtKB-UniRule"/>
</dbReference>
<dbReference type="GO" id="GO:0003743">
    <property type="term" value="F:translation initiation factor activity"/>
    <property type="evidence" value="ECO:0007669"/>
    <property type="project" value="UniProtKB-UniRule"/>
</dbReference>
<dbReference type="CDD" id="cd01887">
    <property type="entry name" value="IF2_eIF5B"/>
    <property type="match status" value="1"/>
</dbReference>
<dbReference type="CDD" id="cd03702">
    <property type="entry name" value="IF2_mtIF2_II"/>
    <property type="match status" value="1"/>
</dbReference>
<dbReference type="CDD" id="cd03692">
    <property type="entry name" value="mtIF2_IVc"/>
    <property type="match status" value="1"/>
</dbReference>
<dbReference type="FunFam" id="2.40.30.10:FF:000007">
    <property type="entry name" value="Translation initiation factor IF-2"/>
    <property type="match status" value="1"/>
</dbReference>
<dbReference type="FunFam" id="2.40.30.10:FF:000008">
    <property type="entry name" value="Translation initiation factor IF-2"/>
    <property type="match status" value="1"/>
</dbReference>
<dbReference type="FunFam" id="3.40.50.10050:FF:000001">
    <property type="entry name" value="Translation initiation factor IF-2"/>
    <property type="match status" value="1"/>
</dbReference>
<dbReference type="FunFam" id="3.40.50.300:FF:000019">
    <property type="entry name" value="Translation initiation factor IF-2"/>
    <property type="match status" value="1"/>
</dbReference>
<dbReference type="Gene3D" id="1.10.10.2480">
    <property type="match status" value="1"/>
</dbReference>
<dbReference type="Gene3D" id="3.40.50.300">
    <property type="entry name" value="P-loop containing nucleotide triphosphate hydrolases"/>
    <property type="match status" value="1"/>
</dbReference>
<dbReference type="Gene3D" id="2.40.30.10">
    <property type="entry name" value="Translation factors"/>
    <property type="match status" value="2"/>
</dbReference>
<dbReference type="Gene3D" id="3.40.50.10050">
    <property type="entry name" value="Translation initiation factor IF- 2, domain 3"/>
    <property type="match status" value="1"/>
</dbReference>
<dbReference type="HAMAP" id="MF_00100_B">
    <property type="entry name" value="IF_2_B"/>
    <property type="match status" value="1"/>
</dbReference>
<dbReference type="InterPro" id="IPR053905">
    <property type="entry name" value="EF-G-like_DII"/>
</dbReference>
<dbReference type="InterPro" id="IPR044145">
    <property type="entry name" value="IF2_II"/>
</dbReference>
<dbReference type="InterPro" id="IPR006847">
    <property type="entry name" value="IF2_N"/>
</dbReference>
<dbReference type="InterPro" id="IPR027417">
    <property type="entry name" value="P-loop_NTPase"/>
</dbReference>
<dbReference type="InterPro" id="IPR005225">
    <property type="entry name" value="Small_GTP-bd"/>
</dbReference>
<dbReference type="InterPro" id="IPR000795">
    <property type="entry name" value="T_Tr_GTP-bd_dom"/>
</dbReference>
<dbReference type="InterPro" id="IPR000178">
    <property type="entry name" value="TF_IF2_bacterial-like"/>
</dbReference>
<dbReference type="InterPro" id="IPR015760">
    <property type="entry name" value="TIF_IF2"/>
</dbReference>
<dbReference type="InterPro" id="IPR023115">
    <property type="entry name" value="TIF_IF2_dom3"/>
</dbReference>
<dbReference type="InterPro" id="IPR036925">
    <property type="entry name" value="TIF_IF2_dom3_sf"/>
</dbReference>
<dbReference type="InterPro" id="IPR009000">
    <property type="entry name" value="Transl_B-barrel_sf"/>
</dbReference>
<dbReference type="NCBIfam" id="TIGR00487">
    <property type="entry name" value="IF-2"/>
    <property type="match status" value="1"/>
</dbReference>
<dbReference type="NCBIfam" id="TIGR00231">
    <property type="entry name" value="small_GTP"/>
    <property type="match status" value="1"/>
</dbReference>
<dbReference type="PANTHER" id="PTHR43381:SF5">
    <property type="entry name" value="TR-TYPE G DOMAIN-CONTAINING PROTEIN"/>
    <property type="match status" value="1"/>
</dbReference>
<dbReference type="PANTHER" id="PTHR43381">
    <property type="entry name" value="TRANSLATION INITIATION FACTOR IF-2-RELATED"/>
    <property type="match status" value="1"/>
</dbReference>
<dbReference type="Pfam" id="PF22042">
    <property type="entry name" value="EF-G_D2"/>
    <property type="match status" value="1"/>
</dbReference>
<dbReference type="Pfam" id="PF00009">
    <property type="entry name" value="GTP_EFTU"/>
    <property type="match status" value="1"/>
</dbReference>
<dbReference type="Pfam" id="PF11987">
    <property type="entry name" value="IF-2"/>
    <property type="match status" value="1"/>
</dbReference>
<dbReference type="Pfam" id="PF04760">
    <property type="entry name" value="IF2_N"/>
    <property type="match status" value="2"/>
</dbReference>
<dbReference type="SUPFAM" id="SSF52156">
    <property type="entry name" value="Initiation factor IF2/eIF5b, domain 3"/>
    <property type="match status" value="1"/>
</dbReference>
<dbReference type="SUPFAM" id="SSF52540">
    <property type="entry name" value="P-loop containing nucleoside triphosphate hydrolases"/>
    <property type="match status" value="1"/>
</dbReference>
<dbReference type="SUPFAM" id="SSF50447">
    <property type="entry name" value="Translation proteins"/>
    <property type="match status" value="2"/>
</dbReference>
<dbReference type="PROSITE" id="PS51722">
    <property type="entry name" value="G_TR_2"/>
    <property type="match status" value="1"/>
</dbReference>
<accession>B3WER5</accession>
<feature type="chain" id="PRO_1000093796" description="Translation initiation factor IF-2">
    <location>
        <begin position="1"/>
        <end position="943"/>
    </location>
</feature>
<feature type="domain" description="tr-type G">
    <location>
        <begin position="444"/>
        <end position="613"/>
    </location>
</feature>
<feature type="region of interest" description="Disordered" evidence="3">
    <location>
        <begin position="46"/>
        <end position="359"/>
    </location>
</feature>
<feature type="region of interest" description="G1" evidence="1">
    <location>
        <begin position="453"/>
        <end position="460"/>
    </location>
</feature>
<feature type="region of interest" description="G2" evidence="1">
    <location>
        <begin position="478"/>
        <end position="482"/>
    </location>
</feature>
<feature type="region of interest" description="G3" evidence="1">
    <location>
        <begin position="499"/>
        <end position="502"/>
    </location>
</feature>
<feature type="region of interest" description="G4" evidence="1">
    <location>
        <begin position="553"/>
        <end position="556"/>
    </location>
</feature>
<feature type="region of interest" description="G5" evidence="1">
    <location>
        <begin position="589"/>
        <end position="591"/>
    </location>
</feature>
<feature type="compositionally biased region" description="Low complexity" evidence="3">
    <location>
        <begin position="57"/>
        <end position="76"/>
    </location>
</feature>
<feature type="compositionally biased region" description="Basic and acidic residues" evidence="3">
    <location>
        <begin position="92"/>
        <end position="103"/>
    </location>
</feature>
<feature type="compositionally biased region" description="Basic and acidic residues" evidence="3">
    <location>
        <begin position="110"/>
        <end position="124"/>
    </location>
</feature>
<feature type="compositionally biased region" description="Polar residues" evidence="3">
    <location>
        <begin position="130"/>
        <end position="141"/>
    </location>
</feature>
<feature type="compositionally biased region" description="Low complexity" evidence="3">
    <location>
        <begin position="142"/>
        <end position="190"/>
    </location>
</feature>
<feature type="compositionally biased region" description="Basic and acidic residues" evidence="3">
    <location>
        <begin position="191"/>
        <end position="205"/>
    </location>
</feature>
<feature type="compositionally biased region" description="Basic and acidic residues" evidence="3">
    <location>
        <begin position="239"/>
        <end position="250"/>
    </location>
</feature>
<feature type="compositionally biased region" description="Basic and acidic residues" evidence="3">
    <location>
        <begin position="259"/>
        <end position="271"/>
    </location>
</feature>
<feature type="compositionally biased region" description="Low complexity" evidence="3">
    <location>
        <begin position="289"/>
        <end position="299"/>
    </location>
</feature>
<feature type="compositionally biased region" description="Low complexity" evidence="3">
    <location>
        <begin position="315"/>
        <end position="330"/>
    </location>
</feature>
<feature type="compositionally biased region" description="Basic residues" evidence="3">
    <location>
        <begin position="331"/>
        <end position="342"/>
    </location>
</feature>
<feature type="compositionally biased region" description="Basic and acidic residues" evidence="3">
    <location>
        <begin position="346"/>
        <end position="358"/>
    </location>
</feature>
<feature type="binding site" evidence="2">
    <location>
        <begin position="453"/>
        <end position="460"/>
    </location>
    <ligand>
        <name>GTP</name>
        <dbReference type="ChEBI" id="CHEBI:37565"/>
    </ligand>
</feature>
<feature type="binding site" evidence="2">
    <location>
        <begin position="499"/>
        <end position="503"/>
    </location>
    <ligand>
        <name>GTP</name>
        <dbReference type="ChEBI" id="CHEBI:37565"/>
    </ligand>
</feature>
<feature type="binding site" evidence="2">
    <location>
        <begin position="553"/>
        <end position="556"/>
    </location>
    <ligand>
        <name>GTP</name>
        <dbReference type="ChEBI" id="CHEBI:37565"/>
    </ligand>
</feature>
<organism>
    <name type="scientific">Lacticaseibacillus casei (strain BL23)</name>
    <name type="common">Lactobacillus casei</name>
    <dbReference type="NCBI Taxonomy" id="543734"/>
    <lineage>
        <taxon>Bacteria</taxon>
        <taxon>Bacillati</taxon>
        <taxon>Bacillota</taxon>
        <taxon>Bacilli</taxon>
        <taxon>Lactobacillales</taxon>
        <taxon>Lactobacillaceae</taxon>
        <taxon>Lacticaseibacillus</taxon>
    </lineage>
</organism>
<protein>
    <recommendedName>
        <fullName evidence="2">Translation initiation factor IF-2</fullName>
    </recommendedName>
</protein>
<evidence type="ECO:0000250" key="1"/>
<evidence type="ECO:0000255" key="2">
    <source>
        <dbReference type="HAMAP-Rule" id="MF_00100"/>
    </source>
</evidence>
<evidence type="ECO:0000256" key="3">
    <source>
        <dbReference type="SAM" id="MobiDB-lite"/>
    </source>
</evidence>
<comment type="function">
    <text evidence="2">One of the essential components for the initiation of protein synthesis. Protects formylmethionyl-tRNA from spontaneous hydrolysis and promotes its binding to the 30S ribosomal subunits. Also involved in the hydrolysis of GTP during the formation of the 70S ribosomal complex.</text>
</comment>
<comment type="subcellular location">
    <subcellularLocation>
        <location evidence="2">Cytoplasm</location>
    </subcellularLocation>
</comment>
<comment type="similarity">
    <text evidence="2">Belongs to the TRAFAC class translation factor GTPase superfamily. Classic translation factor GTPase family. IF-2 subfamily.</text>
</comment>
<name>IF2_LACCB</name>
<keyword id="KW-0963">Cytoplasm</keyword>
<keyword id="KW-0342">GTP-binding</keyword>
<keyword id="KW-0396">Initiation factor</keyword>
<keyword id="KW-0547">Nucleotide-binding</keyword>
<keyword id="KW-0648">Protein biosynthesis</keyword>
<proteinExistence type="inferred from homology"/>
<sequence length="943" mass="103151">MGKKRVYEFAKEMHVDNKDVIDIAKNLGIEVKNHMSSIDQDQEAKIKGMLSKQSAGKAPSSQAAKTPAKAAKTSSAAHKEAAKKPVAASAKSNDHADVAEHSQKNAKPAAKQENKPARSNKTSDGKIILSKSTILRPRSTQTAHTNTNHNRGGNTASANNTANGRNSNRSNNNNNNRSANNANRSGNNNRSNERNRNDRNRRFDNQRVTGPMPRAGRPTAANGNPRPVAGNGGKFVKPASERQQPKRQEAVKPANAASKRSEQPRTERPRTEQPAATTNQRFTKPAPVPAAAAPKPASAGSQDNRNSRRGGGNSNFGRSNSYGNRNGFNRNNRRNKKNKRRQQSAPKKEMPQRKERPLPETLIYEVGMNAQDLGKILHREPAELIKKLFMLGVMVNQNQSLDKDTIELLATDYGIDAQEKVHEDISDLDKVFEEENKNQDNLQPRPPVVTIMGHVDHGKTTLLDKLRHTHVTEGEAGGITQHIGAYQVKLRDRLITFLDTPGHAAFTNMRARGADITDIVVLVVAADDGVMPQTIEAIHHAQAAKAPIIVAVNKIDKPGANPDHVMEQLTEYGLIPEDWGGDTIFVKISAKFGKNIDELLEMILLEADVLELKANPDQKAVGTVIEARLDKGKGPVATVLVQQGTLHTGDPIVVGNTFGRVRAMTNDHGRRVKDALPSMPVEITGINDVPQSADKFVVFADERTARAAGEERAKRAQEEERKNTNHVTLDNLFETMKEGQLKEVDVIIKADVQGSVEALAGSLEKIEVKGVRVNIIHQAVGAINESDVTLAAASNAIIIGFNVRPTALAKAQAEQDDVDIRLHSVIYKAIEEVEAAMKGMLEPTYEEKVIGTVTVRETIPVSKVGTVVGGYVDSGYITRDAGVRLVRDGIVKYEGKLGSLRRFKDDVKEVRQGFELGLTIENYNDIKVDDQIEAFTMEQVPVK</sequence>
<reference key="1">
    <citation type="submission" date="2008-06" db="EMBL/GenBank/DDBJ databases">
        <title>Lactobacillus casei BL23 complete genome sequence.</title>
        <authorList>
            <person name="Maze A."/>
            <person name="Boel G."/>
            <person name="Bourand A."/>
            <person name="Loux V."/>
            <person name="Gibrat J.F."/>
            <person name="Zuniga M."/>
            <person name="Hartke A."/>
            <person name="Deutscher J."/>
        </authorList>
    </citation>
    <scope>NUCLEOTIDE SEQUENCE [LARGE SCALE GENOMIC DNA]</scope>
    <source>
        <strain>BL23</strain>
    </source>
</reference>